<gene>
    <name evidence="23" type="primary">SIN3A</name>
</gene>
<name>SIN3A_HUMAN</name>
<sequence length="1273" mass="145175">MKRRLDDQESPVYAAQQRRIPGSTEAFPHQHRVLAPAPPVYEAVSETMQSATGIQYSVTPSYQVSAMPQSSGSHGPAIAAVHSSHHHPTAVQPHGGQVVQSHAHPAPPVAPVQGQQQFQRLKVEDALSYLDQVKLQFGSQPQVYNDFLDIMKEFKSQSIDTPGVISRVSQLFKGHPDLIMGFNTFLPPGYKIEVQTNDMVNVTTPGQVHQIPTHGIQPQPQPPPQHPSQPSAQSAPAPAQPAPQPPPAKVSKPSQLQAHTPASQQTPPLPPYASPRSPPVQPHTPVTISLGTAPSLQNNQPVEFNHAINYVNKIKNRFQGQPDIYKAFLEILHTYQKEQRNAKEAGGNYTPALTEQEVYAQVARLFKNQEDLLSEFGQFLPDANSSVLLSKTTAEKVDSVRNDHGGTVKKPQLNNKPQRPSQNGCQIRRHPTGTTPPVKKKPKLLNLKDSSMADASKHGGGTESLFFDKVRKALRSAEAYENFLRCLVIFNQEVISRAELVQLVSPFLGKFPELFNWFKNFLGYKESVHLETYPKERATEGIAMEIDYASCKRLGSSYRALPKSYQQPKCTGRTPLCKEVLNDTWVSFPSWSEDSTFVSSKKTQYEEHIYRCEDERFELDVVLETNLATIRVLEAIQKKLSRLSAEEQAKFRLDNTLGGTSEVIHRKALQRIYADKAADIIDGLRKNPSIAVPIVLKRLKMKEEEWREAQRGFNKVWREQNEKYYLKSLDHQGINFKQNDTKVLRSKSLLNEIESIYDERQEQATEENAGVPVGPHLSLAYEDKQILEDAAALIIHHVKRQTGIQKEDKYKIKQIMHHFIPDLLFAQRGDLSDVEEEEEEEMDVDEATGAVKKHNGVGGSPPKSKLLFSNTAAQKLRGMDEVYNLFYVNNNWYIFMRLHQILCLRLLRICSQAERQIEEENREREWEREVLGIKRDKSDSPAIQLRLKEPMDVDVEDYYPAFLDMVRSLLDGNIDSSQYEDSLREMFTIHAYIAFTMDKLIQSIVRQLQHIVSDEICVQVTDLYLAENNNGATGGQLNTQNSRSLLESTYQRKAEQLMSDENCFKLMFIQSQGQVQLTIELLDTEEENSDDPVEAERWSDYVERYMNSDTTSPELREHLAQKPVFLPRNLRRIRKCQRGREQQEKEGKEGNSKKTMENVDSLDKLECRFKLNSYKMVYVIKSEDYMYRRTALLRAHQSHERVSKRLHQRFQAWVDKWTKEHVPREMAAETSKWLMGEGLEGLVPCTTTCDTETLHFVSINKYRVKYGTVFKAP</sequence>
<feature type="chain" id="PRO_0000121537" description="Paired amphipathic helix protein Sin3a">
    <location>
        <begin position="1"/>
        <end position="1273"/>
    </location>
</feature>
<feature type="domain" description="PAH 1" evidence="4">
    <location>
        <begin position="119"/>
        <end position="189"/>
    </location>
</feature>
<feature type="domain" description="PAH 2" evidence="4">
    <location>
        <begin position="300"/>
        <end position="383"/>
    </location>
</feature>
<feature type="domain" description="PAH 3" evidence="4">
    <location>
        <begin position="456"/>
        <end position="525"/>
    </location>
</feature>
<feature type="region of interest" description="Disordered" evidence="5">
    <location>
        <begin position="1"/>
        <end position="23"/>
    </location>
</feature>
<feature type="region of interest" description="Disordered" evidence="5">
    <location>
        <begin position="87"/>
        <end position="110"/>
    </location>
</feature>
<feature type="region of interest" description="Interaction with HCFC1" evidence="9">
    <location>
        <begin position="119"/>
        <end position="196"/>
    </location>
</feature>
<feature type="region of interest" description="Interaction with REST" evidence="1">
    <location>
        <begin position="205"/>
        <end position="480"/>
    </location>
</feature>
<feature type="region of interest" description="Disordered" evidence="5">
    <location>
        <begin position="205"/>
        <end position="297"/>
    </location>
</feature>
<feature type="region of interest" description="Disordered" evidence="5">
    <location>
        <begin position="398"/>
        <end position="446"/>
    </location>
</feature>
<feature type="region of interest" description="Interaction with SAP30" evidence="2">
    <location>
        <begin position="458"/>
        <end position="525"/>
    </location>
</feature>
<feature type="region of interest" description="Interaction with NCOR1" evidence="2">
    <location>
        <begin position="523"/>
        <end position="850"/>
    </location>
</feature>
<feature type="region of interest" description="Interaction with SUDS3 and SAP130" evidence="10">
    <location>
        <begin position="524"/>
        <end position="659"/>
    </location>
</feature>
<feature type="region of interest" description="Interaction with HDAC1 and ARID4B" evidence="10">
    <location>
        <begin position="687"/>
        <end position="829"/>
    </location>
</feature>
<feature type="region of interest" description="Interaction with OGT" evidence="8">
    <location>
        <begin position="888"/>
        <end position="967"/>
    </location>
</feature>
<feature type="region of interest" description="Disordered" evidence="5">
    <location>
        <begin position="1136"/>
        <end position="1156"/>
    </location>
</feature>
<feature type="coiled-coil region" evidence="3">
    <location>
        <begin position="903"/>
        <end position="932"/>
    </location>
</feature>
<feature type="compositionally biased region" description="Low complexity" evidence="5">
    <location>
        <begin position="228"/>
        <end position="237"/>
    </location>
</feature>
<feature type="compositionally biased region" description="Pro residues" evidence="5">
    <location>
        <begin position="238"/>
        <end position="248"/>
    </location>
</feature>
<feature type="compositionally biased region" description="Polar residues" evidence="5">
    <location>
        <begin position="252"/>
        <end position="266"/>
    </location>
</feature>
<feature type="compositionally biased region" description="Pro residues" evidence="5">
    <location>
        <begin position="267"/>
        <end position="282"/>
    </location>
</feature>
<feature type="compositionally biased region" description="Polar residues" evidence="5">
    <location>
        <begin position="284"/>
        <end position="297"/>
    </location>
</feature>
<feature type="compositionally biased region" description="Polar residues" evidence="5">
    <location>
        <begin position="412"/>
        <end position="425"/>
    </location>
</feature>
<feature type="compositionally biased region" description="Basic and acidic residues" evidence="5">
    <location>
        <begin position="1138"/>
        <end position="1156"/>
    </location>
</feature>
<feature type="modified residue" description="Phosphoserine" evidence="25 26 31">
    <location>
        <position position="10"/>
    </location>
</feature>
<feature type="modified residue" description="Phosphoserine" evidence="25">
    <location>
        <position position="277"/>
    </location>
</feature>
<feature type="modified residue" description="Phosphothreonine" evidence="2">
    <location>
        <position position="284"/>
    </location>
</feature>
<feature type="modified residue" description="N6-acetyllysine" evidence="27">
    <location>
        <position position="469"/>
    </location>
</feature>
<feature type="modified residue" description="Phosphoserine" evidence="25 28 29 30 31">
    <location>
        <position position="832"/>
    </location>
</feature>
<feature type="modified residue" description="Phosphoserine" evidence="24 29 30">
    <location>
        <position position="860"/>
    </location>
</feature>
<feature type="modified residue" description="N6-acetyllysine" evidence="2">
    <location>
        <position position="865"/>
    </location>
</feature>
<feature type="modified residue" description="N6-acetyllysine" evidence="2">
    <location>
        <position position="875"/>
    </location>
</feature>
<feature type="modified residue" description="Phosphoserine" evidence="25 29 31">
    <location>
        <position position="940"/>
    </location>
</feature>
<feature type="modified residue" description="Phosphoserine" evidence="32">
    <location>
        <position position="1089"/>
    </location>
</feature>
<feature type="modified residue" description="Phosphoserine" evidence="25 28 29 31">
    <location>
        <position position="1112"/>
    </location>
</feature>
<feature type="cross-link" description="Glycyl lysine isopeptide (Lys-Gly) (interchain with G-Cter in SUMO2)" evidence="33">
    <location>
        <position position="122"/>
    </location>
</feature>
<feature type="cross-link" description="Glycyl lysine isopeptide (Lys-Gly) (interchain with G-Cter in SUMO2)" evidence="33">
    <location>
        <position position="134"/>
    </location>
</feature>
<feature type="cross-link" description="Glycyl lysine isopeptide (Lys-Gly) (interchain with G-Cter in SUMO2)" evidence="33">
    <location>
        <position position="563"/>
    </location>
</feature>
<feature type="sequence variant" id="VAR_081785" description="In WITKOS." evidence="18">
    <location>
        <begin position="1104"/>
        <end position="1273"/>
    </location>
</feature>
<feature type="sequence variant" id="VAR_062129" description="In dbSNP:rs60213317.">
    <original>M</original>
    <variation>L</variation>
    <location>
        <position position="1156"/>
    </location>
</feature>
<feature type="sequence conflict" description="In Ref. 4; AAK95854." evidence="20" ref="4">
    <original>G</original>
    <variation>R</variation>
    <location>
        <position position="163"/>
    </location>
</feature>
<feature type="sequence conflict" description="In Ref. 4; AAK95854." evidence="20" ref="4">
    <original>QLFKGHPD</original>
    <variation>HYSKGPPI</variation>
    <location>
        <begin position="170"/>
        <end position="177"/>
    </location>
</feature>
<feature type="sequence conflict" description="In Ref. 4; AAK95854." evidence="20" ref="4">
    <original>FNTFLPPGYKI</original>
    <variation>IQHLFAPWATKM</variation>
    <location>
        <begin position="182"/>
        <end position="192"/>
    </location>
</feature>
<feature type="sequence conflict" description="In Ref. 3; BAC04801." evidence="20" ref="3">
    <original>I</original>
    <variation>T</variation>
    <location>
        <position position="216"/>
    </location>
</feature>
<feature type="sequence conflict" description="In Ref. 4; AAK95854." evidence="20" ref="4">
    <original>S</original>
    <variation>F</variation>
    <location>
        <position position="386"/>
    </location>
</feature>
<feature type="sequence conflict" description="In Ref. 4; AAK95854." evidence="20" ref="4">
    <original>E</original>
    <variation>D</variation>
    <location>
        <position position="536"/>
    </location>
</feature>
<feature type="sequence conflict" description="In Ref. 4; AAK95854." evidence="20" ref="4">
    <original>P</original>
    <variation>G</variation>
    <location>
        <position position="562"/>
    </location>
</feature>
<feature type="sequence conflict" description="In Ref. 4; AAK95854." evidence="20" ref="4">
    <original>PL</original>
    <variation>GV</variation>
    <location>
        <begin position="575"/>
        <end position="576"/>
    </location>
</feature>
<feature type="sequence conflict" description="In Ref. 4; AAK95854." evidence="20" ref="4">
    <original>S</original>
    <variation>C</variation>
    <location>
        <position position="595"/>
    </location>
</feature>
<feature type="sequence conflict" description="In Ref. 4; AAK95854." evidence="20" ref="4">
    <original>ELD</original>
    <variation>DLM</variation>
    <location>
        <begin position="618"/>
        <end position="620"/>
    </location>
</feature>
<feature type="sequence conflict" description="In Ref. 3; BAC11280." evidence="20" ref="3">
    <original>Q</original>
    <variation>R</variation>
    <location>
        <position position="1009"/>
    </location>
</feature>
<feature type="sequence conflict" description="In Ref. 1; AAP97288." evidence="20" ref="1">
    <original>TT</original>
    <variation>NN</variation>
    <location>
        <begin position="1247"/>
        <end position="1248"/>
    </location>
</feature>
<organism>
    <name type="scientific">Homo sapiens</name>
    <name type="common">Human</name>
    <dbReference type="NCBI Taxonomy" id="9606"/>
    <lineage>
        <taxon>Eukaryota</taxon>
        <taxon>Metazoa</taxon>
        <taxon>Chordata</taxon>
        <taxon>Craniata</taxon>
        <taxon>Vertebrata</taxon>
        <taxon>Euteleostomi</taxon>
        <taxon>Mammalia</taxon>
        <taxon>Eutheria</taxon>
        <taxon>Euarchontoglires</taxon>
        <taxon>Primates</taxon>
        <taxon>Haplorrhini</taxon>
        <taxon>Catarrhini</taxon>
        <taxon>Hominidae</taxon>
        <taxon>Homo</taxon>
    </lineage>
</organism>
<comment type="function">
    <text evidence="2 8">Acts as a transcriptional repressor. Corepressor for REST. Interacts with MXI1 to repress MYC responsive genes and antagonize MYC oncogenic activities. Also interacts with MXD1-MAX heterodimers to repress transcription by tethering SIN3A to DNA. Acts cooperatively with OGT to repress transcription in parallel with histone deacetylation. Involved in the control of the circadian rhythms. Required for the transcriptional repression of circadian target genes, such as PER1, mediated by the large PER complex through histone deacetylation. Cooperates with FOXK1 to regulate cell cycle progression probably by repressing cell cycle inhibitor genes expression (By similarity). Required for cortical neuron differentiation and callosal axon elongation (By similarity).</text>
</comment>
<comment type="subunit">
    <text evidence="2 6 7 8 9 10 11 12 13 14 15 16 17">Interacts with ARID4B, BRMS1L, HCFC1, HDAC1, HDAC2, MXI1, SAP30L, SAP130, SFPQ and TOPORS (PubMed:11259580, PubMed:11897684, PubMed:12670868, PubMed:12724404, PubMed:15451426, PubMed:16820529, PubMed:17803295). Interacts with OGT (via TPRs 1-6); the interaction mediates transcriptional repression in parallel with histone deacetylase (PubMed:12150998). Interacts with BAZ2A, MXD1, MXD3, MXD4, MBD2, DACH1, NCOR1, NR4A2, REST, RLIM, SAP30, SETDB1, SMYD2, and SUDS3 (PubMed:14525983). Interacts with PHF12 in a complex composed of HDAC1, PHF12 and SAP30 (By similarity). Interacts with TET1; the interaction recruits SIN3A to gene promoters (PubMed:21490601). The large PER complex involved in the histone deacetylation is composed of at least HDAC1, PER2, SFPQ and SIN3A (By similarity). Interacts with KLF11 (By similarity). Interacts with PPHLN1 (PubMed:17963697). Found in a complex with YY1, GON4L and HDAC1 (By similarity). Interacts (via PAH2) with FOXK1 (By similarity). Interacts with FOXK2 (By similarity). Found in a complex composed of at least SINHCAF, SIN3A, HDAC1, SAP30, RBBP4, OGT and TET1. Interacts with SINHCAF (By similarity). Interacts with SPHK2 (PubMed:19729656).</text>
</comment>
<comment type="interaction">
    <interactant intactId="EBI-347218">
        <id>Q96ST3</id>
    </interactant>
    <interactant intactId="EBI-396176">
        <id>P51610</id>
        <label>HCFC1</label>
    </interactant>
    <organismsDiffer>false</organismsDiffer>
    <experiments>6</experiments>
</comment>
<comment type="interaction">
    <interactant intactId="EBI-347218">
        <id>Q96ST3</id>
    </interactant>
    <interactant intactId="EBI-301834">
        <id>Q13547</id>
        <label>HDAC1</label>
    </interactant>
    <organismsDiffer>false</organismsDiffer>
    <experiments>13</experiments>
</comment>
<comment type="interaction">
    <interactant intactId="EBI-347218">
        <id>Q96ST3</id>
    </interactant>
    <interactant intactId="EBI-301821">
        <id>Q92769</id>
        <label>HDAC2</label>
    </interactant>
    <organismsDiffer>false</organismsDiffer>
    <experiments>7</experiments>
</comment>
<comment type="interaction">
    <interactant intactId="EBI-347218">
        <id>Q96ST3</id>
    </interactant>
    <interactant intactId="EBI-466029">
        <id>P42858</id>
        <label>HTT</label>
    </interactant>
    <organismsDiffer>false</organismsDiffer>
    <experiments>4</experiments>
</comment>
<comment type="interaction">
    <interactant intactId="EBI-347218">
        <id>Q96ST3</id>
    </interactant>
    <interactant intactId="EBI-389787">
        <id>Q9H160</id>
        <label>ING2</label>
    </interactant>
    <organismsDiffer>false</organismsDiffer>
    <experiments>4</experiments>
</comment>
<comment type="interaction">
    <interactant intactId="EBI-347218">
        <id>Q96ST3</id>
    </interactant>
    <interactant intactId="EBI-1189067">
        <id>P51608</id>
        <label>MECP2</label>
    </interactant>
    <organismsDiffer>false</organismsDiffer>
    <experiments>2</experiments>
</comment>
<comment type="interaction">
    <interactant intactId="EBI-347218">
        <id>Q96ST3</id>
    </interactant>
    <interactant intactId="EBI-924893">
        <id>Q9UQ80</id>
        <label>PA2G4</label>
    </interactant>
    <organismsDiffer>false</organismsDiffer>
    <experiments>4</experiments>
</comment>
<comment type="interaction">
    <interactant intactId="EBI-347218">
        <id>Q96ST3</id>
    </interactant>
    <interactant intactId="EBI-355453">
        <id>P23246</id>
        <label>SFPQ</label>
    </interactant>
    <organismsDiffer>false</organismsDiffer>
    <experiments>2</experiments>
</comment>
<comment type="interaction">
    <interactant intactId="EBI-347218">
        <id>Q96ST3</id>
    </interactant>
    <interactant intactId="EBI-347281">
        <id>P12755</id>
        <label>SKI</label>
    </interactant>
    <organismsDiffer>false</organismsDiffer>
    <experiments>3</experiments>
</comment>
<comment type="interaction">
    <interactant intactId="EBI-347218">
        <id>Q96ST3</id>
    </interactant>
    <interactant intactId="EBI-366083">
        <id>P04637</id>
        <label>TP53</label>
    </interactant>
    <organismsDiffer>false</organismsDiffer>
    <experiments>2</experiments>
</comment>
<comment type="subcellular location">
    <subcellularLocation>
        <location evidence="4 13">Nucleus</location>
    </subcellularLocation>
    <subcellularLocation>
        <location evidence="13">Nucleus</location>
        <location evidence="13">Nucleolus</location>
    </subcellularLocation>
    <text>Recruited to the nucleolus by SAP30L.</text>
</comment>
<comment type="tissue specificity">
    <text evidence="18">Expressed in the developing brain, with highest levels of expression detected in the ventricular zone of various cortical regions.</text>
</comment>
<comment type="PTM">
    <text evidence="14">SUMO1 sumoylated by TOPORS. Probably desumoylated by SENP2.</text>
</comment>
<comment type="disease" evidence="18 19">
    <disease id="DI-05538">
        <name>Witteveen-Kolk syndrome</name>
        <acronym>WITKOS</acronym>
        <description>An autosomal dominant syndrome characterized by global developmental delay, mild to severe intellectual disability, and facial dysmorphism. Additional features include short stature, microcephaly, joint hypermotility, and small hands and feet with digital abnormalities. Brain imaging shows dilated ventricles, thin corpus callosum and, in some cases, dysgyria or polymicrogyria.</description>
        <dbReference type="MIM" id="613406"/>
    </disease>
    <text>The disease is caused by variants affecting the gene represented in this entry.</text>
</comment>
<accession>Q96ST3</accession>
<accession>B2RNS5</accession>
<accession>Q8N8N4</accession>
<accession>Q8NC83</accession>
<accession>Q8WV18</accession>
<accession>Q96L98</accession>
<accession>Q9UFQ1</accession>
<dbReference type="EMBL" id="AF418569">
    <property type="protein sequence ID" value="AAP97288.1"/>
    <property type="molecule type" value="mRNA"/>
</dbReference>
<dbReference type="EMBL" id="BC018973">
    <property type="protein sequence ID" value="AAH18973.1"/>
    <property type="molecule type" value="mRNA"/>
</dbReference>
<dbReference type="EMBL" id="BC137098">
    <property type="protein sequence ID" value="AAI37099.1"/>
    <property type="molecule type" value="mRNA"/>
</dbReference>
<dbReference type="EMBL" id="BC137099">
    <property type="protein sequence ID" value="AAI37100.1"/>
    <property type="molecule type" value="mRNA"/>
</dbReference>
<dbReference type="EMBL" id="AK027559">
    <property type="protein sequence ID" value="BAB55197.1"/>
    <property type="molecule type" value="mRNA"/>
</dbReference>
<dbReference type="EMBL" id="AK074903">
    <property type="protein sequence ID" value="BAC11280.1"/>
    <property type="molecule type" value="mRNA"/>
</dbReference>
<dbReference type="EMBL" id="AK096477">
    <property type="protein sequence ID" value="BAC04801.1"/>
    <property type="molecule type" value="mRNA"/>
</dbReference>
<dbReference type="EMBL" id="AY044430">
    <property type="protein sequence ID" value="AAK95854.1"/>
    <property type="molecule type" value="mRNA"/>
</dbReference>
<dbReference type="EMBL" id="AL117513">
    <property type="protein sequence ID" value="CAB55972.1"/>
    <property type="molecule type" value="mRNA"/>
</dbReference>
<dbReference type="CCDS" id="CCDS10279.1"/>
<dbReference type="PIR" id="T17282">
    <property type="entry name" value="T17282"/>
</dbReference>
<dbReference type="RefSeq" id="NP_001138829.1">
    <property type="nucleotide sequence ID" value="NM_001145357.2"/>
</dbReference>
<dbReference type="RefSeq" id="NP_001138830.1">
    <property type="nucleotide sequence ID" value="NM_001145358.2"/>
</dbReference>
<dbReference type="RefSeq" id="NP_056292.1">
    <property type="nucleotide sequence ID" value="NM_015477.3"/>
</dbReference>
<dbReference type="RefSeq" id="XP_006720528.1">
    <property type="nucleotide sequence ID" value="XM_006720465.4"/>
</dbReference>
<dbReference type="RefSeq" id="XP_006720529.1">
    <property type="nucleotide sequence ID" value="XM_006720466.4"/>
</dbReference>
<dbReference type="RefSeq" id="XP_006720530.1">
    <property type="nucleotide sequence ID" value="XM_006720467.3"/>
</dbReference>
<dbReference type="RefSeq" id="XP_047288311.1">
    <property type="nucleotide sequence ID" value="XM_047432355.1"/>
</dbReference>
<dbReference type="RefSeq" id="XP_047288312.1">
    <property type="nucleotide sequence ID" value="XM_047432356.1"/>
</dbReference>
<dbReference type="RefSeq" id="XP_047288314.1">
    <property type="nucleotide sequence ID" value="XM_047432358.1"/>
</dbReference>
<dbReference type="RefSeq" id="XP_047288315.1">
    <property type="nucleotide sequence ID" value="XM_047432359.1"/>
</dbReference>
<dbReference type="RefSeq" id="XP_047288316.1">
    <property type="nucleotide sequence ID" value="XM_047432360.1"/>
</dbReference>
<dbReference type="RefSeq" id="XP_047288317.1">
    <property type="nucleotide sequence ID" value="XM_047432361.1"/>
</dbReference>
<dbReference type="RefSeq" id="XP_047288318.1">
    <property type="nucleotide sequence ID" value="XM_047432362.1"/>
</dbReference>
<dbReference type="RefSeq" id="XP_054233663.1">
    <property type="nucleotide sequence ID" value="XM_054377688.1"/>
</dbReference>
<dbReference type="RefSeq" id="XP_054233664.1">
    <property type="nucleotide sequence ID" value="XM_054377689.1"/>
</dbReference>
<dbReference type="RefSeq" id="XP_054233665.1">
    <property type="nucleotide sequence ID" value="XM_054377690.1"/>
</dbReference>
<dbReference type="RefSeq" id="XP_054233666.1">
    <property type="nucleotide sequence ID" value="XM_054377691.1"/>
</dbReference>
<dbReference type="RefSeq" id="XP_054233667.1">
    <property type="nucleotide sequence ID" value="XM_054377692.1"/>
</dbReference>
<dbReference type="RefSeq" id="XP_054233668.1">
    <property type="nucleotide sequence ID" value="XM_054377693.1"/>
</dbReference>
<dbReference type="RefSeq" id="XP_054233669.1">
    <property type="nucleotide sequence ID" value="XM_054377694.1"/>
</dbReference>
<dbReference type="RefSeq" id="XP_054233670.1">
    <property type="nucleotide sequence ID" value="XM_054377695.1"/>
</dbReference>
<dbReference type="RefSeq" id="XP_054233671.1">
    <property type="nucleotide sequence ID" value="XM_054377696.1"/>
</dbReference>
<dbReference type="SMR" id="Q96ST3"/>
<dbReference type="BioGRID" id="117439">
    <property type="interactions" value="355"/>
</dbReference>
<dbReference type="ComplexPortal" id="CPX-3321">
    <property type="entry name" value="SIN3A histone deacetylase complex"/>
</dbReference>
<dbReference type="ComplexPortal" id="CPX-3323">
    <property type="entry name" value="SIN3A histone deacetylase complex, ES cell-specific variant"/>
</dbReference>
<dbReference type="CORUM" id="Q96ST3"/>
<dbReference type="DIP" id="DIP-31515N"/>
<dbReference type="FunCoup" id="Q96ST3">
    <property type="interactions" value="4534"/>
</dbReference>
<dbReference type="IntAct" id="Q96ST3">
    <property type="interactions" value="113"/>
</dbReference>
<dbReference type="MINT" id="Q96ST3"/>
<dbReference type="STRING" id="9606.ENSP00000378402"/>
<dbReference type="ChEMBL" id="CHEMBL5465264"/>
<dbReference type="GlyCosmos" id="Q96ST3">
    <property type="glycosylation" value="8 sites, 2 glycans"/>
</dbReference>
<dbReference type="GlyGen" id="Q96ST3">
    <property type="glycosylation" value="11 sites, 2 O-linked glycans (10 sites)"/>
</dbReference>
<dbReference type="iPTMnet" id="Q96ST3"/>
<dbReference type="MetOSite" id="Q96ST3"/>
<dbReference type="PhosphoSitePlus" id="Q96ST3"/>
<dbReference type="SwissPalm" id="Q96ST3"/>
<dbReference type="BioMuta" id="SIN3A"/>
<dbReference type="DMDM" id="37999759"/>
<dbReference type="jPOST" id="Q96ST3"/>
<dbReference type="MassIVE" id="Q96ST3"/>
<dbReference type="PaxDb" id="9606-ENSP00000378402"/>
<dbReference type="PeptideAtlas" id="Q96ST3"/>
<dbReference type="ProteomicsDB" id="78146"/>
<dbReference type="Pumba" id="Q96ST3"/>
<dbReference type="Antibodypedia" id="3857">
    <property type="antibodies" value="273 antibodies from 38 providers"/>
</dbReference>
<dbReference type="DNASU" id="25942"/>
<dbReference type="Ensembl" id="ENST00000360439.8">
    <property type="protein sequence ID" value="ENSP00000353622.4"/>
    <property type="gene ID" value="ENSG00000169375.17"/>
</dbReference>
<dbReference type="Ensembl" id="ENST00000394947.8">
    <property type="protein sequence ID" value="ENSP00000378402.3"/>
    <property type="gene ID" value="ENSG00000169375.17"/>
</dbReference>
<dbReference type="Ensembl" id="ENST00000394949.8">
    <property type="protein sequence ID" value="ENSP00000378403.4"/>
    <property type="gene ID" value="ENSG00000169375.17"/>
</dbReference>
<dbReference type="Ensembl" id="ENST00000564778.6">
    <property type="protein sequence ID" value="ENSP00000455204.2"/>
    <property type="gene ID" value="ENSG00000169375.17"/>
</dbReference>
<dbReference type="Ensembl" id="ENST00000565264.2">
    <property type="protein sequence ID" value="ENSP00000454296.2"/>
    <property type="gene ID" value="ENSG00000169375.17"/>
</dbReference>
<dbReference type="Ensembl" id="ENST00000704312.1">
    <property type="protein sequence ID" value="ENSP00000515834.1"/>
    <property type="gene ID" value="ENSG00000169375.17"/>
</dbReference>
<dbReference type="GeneID" id="25942"/>
<dbReference type="KEGG" id="hsa:25942"/>
<dbReference type="MANE-Select" id="ENST00000394947.8">
    <property type="protein sequence ID" value="ENSP00000378402.3"/>
    <property type="RefSeq nucleotide sequence ID" value="NM_001145358.2"/>
    <property type="RefSeq protein sequence ID" value="NP_001138830.1"/>
</dbReference>
<dbReference type="UCSC" id="uc002bai.4">
    <property type="organism name" value="human"/>
</dbReference>
<dbReference type="AGR" id="HGNC:19353"/>
<dbReference type="CTD" id="25942"/>
<dbReference type="DisGeNET" id="25942"/>
<dbReference type="GeneCards" id="SIN3A"/>
<dbReference type="HGNC" id="HGNC:19353">
    <property type="gene designation" value="SIN3A"/>
</dbReference>
<dbReference type="HPA" id="ENSG00000169375">
    <property type="expression patterns" value="Low tissue specificity"/>
</dbReference>
<dbReference type="MalaCards" id="SIN3A"/>
<dbReference type="MIM" id="607776">
    <property type="type" value="gene"/>
</dbReference>
<dbReference type="MIM" id="613406">
    <property type="type" value="phenotype"/>
</dbReference>
<dbReference type="neXtProt" id="NX_Q96ST3"/>
<dbReference type="OpenTargets" id="ENSG00000169375"/>
<dbReference type="Orphanet" id="94065">
    <property type="disease" value="15q24 microdeletion syndrome"/>
</dbReference>
<dbReference type="Orphanet" id="500166">
    <property type="disease" value="SIN3-related intellectual disability syndrome due to a point mutation"/>
</dbReference>
<dbReference type="PharmGKB" id="PA134993567"/>
<dbReference type="VEuPathDB" id="HostDB:ENSG00000169375"/>
<dbReference type="eggNOG" id="KOG4204">
    <property type="taxonomic scope" value="Eukaryota"/>
</dbReference>
<dbReference type="GeneTree" id="ENSGT00940000155491"/>
<dbReference type="HOGENOM" id="CLU_001360_0_1_1"/>
<dbReference type="InParanoid" id="Q96ST3"/>
<dbReference type="OMA" id="MCEEVIK"/>
<dbReference type="OrthoDB" id="10265969at2759"/>
<dbReference type="PAN-GO" id="Q96ST3">
    <property type="GO annotations" value="5 GO annotations based on evolutionary models"/>
</dbReference>
<dbReference type="PhylomeDB" id="Q96ST3"/>
<dbReference type="TreeFam" id="TF106187"/>
<dbReference type="PathwayCommons" id="Q96ST3"/>
<dbReference type="Reactome" id="R-HSA-3899300">
    <property type="pathway name" value="SUMOylation of transcription cofactors"/>
</dbReference>
<dbReference type="Reactome" id="R-HSA-400206">
    <property type="pathway name" value="Regulation of lipid metabolism by PPARalpha"/>
</dbReference>
<dbReference type="Reactome" id="R-HSA-427413">
    <property type="pathway name" value="NoRC negatively regulates rRNA expression"/>
</dbReference>
<dbReference type="Reactome" id="R-HSA-8936459">
    <property type="pathway name" value="RUNX1 regulates genes involved in megakaryocyte differentiation and platelet function"/>
</dbReference>
<dbReference type="Reactome" id="R-HSA-9022538">
    <property type="pathway name" value="Loss of MECP2 binding ability to 5mC-DNA"/>
</dbReference>
<dbReference type="Reactome" id="R-HSA-9022692">
    <property type="pathway name" value="Regulation of MECP2 expression and activity"/>
</dbReference>
<dbReference type="Reactome" id="R-HSA-9022699">
    <property type="pathway name" value="MECP2 regulates neuronal receptors and channels"/>
</dbReference>
<dbReference type="Reactome" id="R-HSA-9022702">
    <property type="pathway name" value="MECP2 regulates transcription of neuronal ligands"/>
</dbReference>
<dbReference type="Reactome" id="R-HSA-9615017">
    <property type="pathway name" value="FOXO-mediated transcription of oxidative stress, metabolic and neuronal genes"/>
</dbReference>
<dbReference type="Reactome" id="R-HSA-9701898">
    <property type="pathway name" value="STAT3 nuclear events downstream of ALK signaling"/>
</dbReference>
<dbReference type="Reactome" id="R-HSA-9707564">
    <property type="pathway name" value="Cytoprotection by HMOX1"/>
</dbReference>
<dbReference type="Reactome" id="R-HSA-9824594">
    <property type="pathway name" value="Regulation of MITF-M-dependent genes involved in apoptosis"/>
</dbReference>
<dbReference type="Reactome" id="R-HSA-9825892">
    <property type="pathway name" value="Regulation of MITF-M-dependent genes involved in cell cycle and proliferation"/>
</dbReference>
<dbReference type="Reactome" id="R-HSA-983231">
    <property type="pathway name" value="Factors involved in megakaryocyte development and platelet production"/>
</dbReference>
<dbReference type="SignaLink" id="Q96ST3"/>
<dbReference type="SIGNOR" id="Q96ST3"/>
<dbReference type="BioGRID-ORCS" id="25942">
    <property type="hits" value="709 hits in 1173 CRISPR screens"/>
</dbReference>
<dbReference type="CD-CODE" id="91857CE7">
    <property type="entry name" value="Nucleolus"/>
</dbReference>
<dbReference type="ChiTaRS" id="SIN3A">
    <property type="organism name" value="human"/>
</dbReference>
<dbReference type="GeneWiki" id="SIN3A"/>
<dbReference type="GenomeRNAi" id="25942"/>
<dbReference type="Pharos" id="Q96ST3">
    <property type="development level" value="Tbio"/>
</dbReference>
<dbReference type="PRO" id="PR:Q96ST3"/>
<dbReference type="Proteomes" id="UP000005640">
    <property type="component" value="Chromosome 15"/>
</dbReference>
<dbReference type="RNAct" id="Q96ST3">
    <property type="molecule type" value="protein"/>
</dbReference>
<dbReference type="Bgee" id="ENSG00000169375">
    <property type="expression patterns" value="Expressed in secondary oocyte and 174 other cell types or tissues"/>
</dbReference>
<dbReference type="ExpressionAtlas" id="Q96ST3">
    <property type="expression patterns" value="baseline and differential"/>
</dbReference>
<dbReference type="GO" id="GO:0000785">
    <property type="term" value="C:chromatin"/>
    <property type="evidence" value="ECO:0000318"/>
    <property type="project" value="GO_Central"/>
</dbReference>
<dbReference type="GO" id="GO:0000118">
    <property type="term" value="C:histone deacetylase complex"/>
    <property type="evidence" value="ECO:0000314"/>
    <property type="project" value="UniProtKB"/>
</dbReference>
<dbReference type="GO" id="GO:0000776">
    <property type="term" value="C:kinetochore"/>
    <property type="evidence" value="ECO:0007669"/>
    <property type="project" value="Ensembl"/>
</dbReference>
<dbReference type="GO" id="GO:0005730">
    <property type="term" value="C:nucleolus"/>
    <property type="evidence" value="ECO:0007669"/>
    <property type="project" value="UniProtKB-SubCell"/>
</dbReference>
<dbReference type="GO" id="GO:0005654">
    <property type="term" value="C:nucleoplasm"/>
    <property type="evidence" value="ECO:0000314"/>
    <property type="project" value="HPA"/>
</dbReference>
<dbReference type="GO" id="GO:0005634">
    <property type="term" value="C:nucleus"/>
    <property type="evidence" value="ECO:0000314"/>
    <property type="project" value="BHF-UCL"/>
</dbReference>
<dbReference type="GO" id="GO:0070822">
    <property type="term" value="C:Sin3-type complex"/>
    <property type="evidence" value="ECO:0000314"/>
    <property type="project" value="UniProtKB"/>
</dbReference>
<dbReference type="GO" id="GO:0017053">
    <property type="term" value="C:transcription repressor complex"/>
    <property type="evidence" value="ECO:0007669"/>
    <property type="project" value="Ensembl"/>
</dbReference>
<dbReference type="GO" id="GO:0003682">
    <property type="term" value="F:chromatin binding"/>
    <property type="evidence" value="ECO:0007669"/>
    <property type="project" value="Ensembl"/>
</dbReference>
<dbReference type="GO" id="GO:0003677">
    <property type="term" value="F:DNA binding"/>
    <property type="evidence" value="ECO:0007669"/>
    <property type="project" value="Ensembl"/>
</dbReference>
<dbReference type="GO" id="GO:0044877">
    <property type="term" value="F:protein-containing complex binding"/>
    <property type="evidence" value="ECO:0007669"/>
    <property type="project" value="Ensembl"/>
</dbReference>
<dbReference type="GO" id="GO:0003723">
    <property type="term" value="F:RNA binding"/>
    <property type="evidence" value="ECO:0007669"/>
    <property type="project" value="Ensembl"/>
</dbReference>
<dbReference type="GO" id="GO:0061629">
    <property type="term" value="F:RNA polymerase II-specific DNA-binding transcription factor binding"/>
    <property type="evidence" value="ECO:0000353"/>
    <property type="project" value="BHF-UCL"/>
</dbReference>
<dbReference type="GO" id="GO:0003714">
    <property type="term" value="F:transcription corepressor activity"/>
    <property type="evidence" value="ECO:0000315"/>
    <property type="project" value="BHF-UCL"/>
</dbReference>
<dbReference type="GO" id="GO:0140416">
    <property type="term" value="F:transcription regulator inhibitor activity"/>
    <property type="evidence" value="ECO:0000314"/>
    <property type="project" value="BHF-UCL"/>
</dbReference>
<dbReference type="GO" id="GO:0002218">
    <property type="term" value="P:activation of innate immune response"/>
    <property type="evidence" value="ECO:0000315"/>
    <property type="project" value="BHF-UCL"/>
</dbReference>
<dbReference type="GO" id="GO:1903351">
    <property type="term" value="P:cellular response to dopamine"/>
    <property type="evidence" value="ECO:0007669"/>
    <property type="project" value="Ensembl"/>
</dbReference>
<dbReference type="GO" id="GO:0071333">
    <property type="term" value="P:cellular response to glucose stimulus"/>
    <property type="evidence" value="ECO:0007669"/>
    <property type="project" value="Ensembl"/>
</dbReference>
<dbReference type="GO" id="GO:0072736">
    <property type="term" value="P:cellular response to tert-butyl hydroperoxide"/>
    <property type="evidence" value="ECO:0007669"/>
    <property type="project" value="Ensembl"/>
</dbReference>
<dbReference type="GO" id="GO:0021895">
    <property type="term" value="P:cerebral cortex neuron differentiation"/>
    <property type="evidence" value="ECO:0000250"/>
    <property type="project" value="UniProtKB"/>
</dbReference>
<dbReference type="GO" id="GO:0006260">
    <property type="term" value="P:DNA replication"/>
    <property type="evidence" value="ECO:0007669"/>
    <property type="project" value="Ensembl"/>
</dbReference>
<dbReference type="GO" id="GO:0002244">
    <property type="term" value="P:hematopoietic progenitor cell differentiation"/>
    <property type="evidence" value="ECO:0007669"/>
    <property type="project" value="Ensembl"/>
</dbReference>
<dbReference type="GO" id="GO:0031507">
    <property type="term" value="P:heterochromatin formation"/>
    <property type="evidence" value="ECO:0000315"/>
    <property type="project" value="BHF-UCL"/>
</dbReference>
<dbReference type="GO" id="GO:0001701">
    <property type="term" value="P:in utero embryonic development"/>
    <property type="evidence" value="ECO:0007669"/>
    <property type="project" value="Ensembl"/>
</dbReference>
<dbReference type="GO" id="GO:0043066">
    <property type="term" value="P:negative regulation of apoptotic process"/>
    <property type="evidence" value="ECO:0007669"/>
    <property type="project" value="Ensembl"/>
</dbReference>
<dbReference type="GO" id="GO:0030336">
    <property type="term" value="P:negative regulation of cell migration"/>
    <property type="evidence" value="ECO:0000303"/>
    <property type="project" value="ComplexPortal"/>
</dbReference>
<dbReference type="GO" id="GO:0042754">
    <property type="term" value="P:negative regulation of circadian rhythm"/>
    <property type="evidence" value="ECO:0000250"/>
    <property type="project" value="UniProtKB"/>
</dbReference>
<dbReference type="GO" id="GO:0045892">
    <property type="term" value="P:negative regulation of DNA-templated transcription"/>
    <property type="evidence" value="ECO:0000250"/>
    <property type="project" value="UniProtKB"/>
</dbReference>
<dbReference type="GO" id="GO:1900181">
    <property type="term" value="P:negative regulation of protein localization to nucleus"/>
    <property type="evidence" value="ECO:0000315"/>
    <property type="project" value="BHF-UCL"/>
</dbReference>
<dbReference type="GO" id="GO:1902455">
    <property type="term" value="P:negative regulation of stem cell population maintenance"/>
    <property type="evidence" value="ECO:0000303"/>
    <property type="project" value="ComplexPortal"/>
</dbReference>
<dbReference type="GO" id="GO:0000122">
    <property type="term" value="P:negative regulation of transcription by RNA polymerase II"/>
    <property type="evidence" value="ECO:0000315"/>
    <property type="project" value="BHF-UCL"/>
</dbReference>
<dbReference type="GO" id="GO:0030512">
    <property type="term" value="P:negative regulation of transforming growth factor beta receptor signaling pathway"/>
    <property type="evidence" value="ECO:0000303"/>
    <property type="project" value="ComplexPortal"/>
</dbReference>
<dbReference type="GO" id="GO:0002230">
    <property type="term" value="P:positive regulation of defense response to virus by host"/>
    <property type="evidence" value="ECO:0000315"/>
    <property type="project" value="BHF-UCL"/>
</dbReference>
<dbReference type="GO" id="GO:0010971">
    <property type="term" value="P:positive regulation of G2/M transition of mitotic cell cycle"/>
    <property type="evidence" value="ECO:0007669"/>
    <property type="project" value="Ensembl"/>
</dbReference>
<dbReference type="GO" id="GO:0045666">
    <property type="term" value="P:positive regulation of neuron differentiation"/>
    <property type="evidence" value="ECO:0000250"/>
    <property type="project" value="UniProtKB"/>
</dbReference>
<dbReference type="GO" id="GO:1902459">
    <property type="term" value="P:positive regulation of stem cell population maintenance"/>
    <property type="evidence" value="ECO:0000303"/>
    <property type="project" value="ComplexPortal"/>
</dbReference>
<dbReference type="GO" id="GO:0008104">
    <property type="term" value="P:protein localization"/>
    <property type="evidence" value="ECO:0007669"/>
    <property type="project" value="Ensembl"/>
</dbReference>
<dbReference type="GO" id="GO:0030516">
    <property type="term" value="P:regulation of axon extension"/>
    <property type="evidence" value="ECO:0000250"/>
    <property type="project" value="UniProtKB"/>
</dbReference>
<dbReference type="GO" id="GO:0010817">
    <property type="term" value="P:regulation of hormone levels"/>
    <property type="evidence" value="ECO:0007669"/>
    <property type="project" value="Ensembl"/>
</dbReference>
<dbReference type="GO" id="GO:0051595">
    <property type="term" value="P:response to methylglyoxal"/>
    <property type="evidence" value="ECO:0007669"/>
    <property type="project" value="Ensembl"/>
</dbReference>
<dbReference type="GO" id="GO:0048511">
    <property type="term" value="P:rhythmic process"/>
    <property type="evidence" value="ECO:0007669"/>
    <property type="project" value="UniProtKB-KW"/>
</dbReference>
<dbReference type="GO" id="GO:0060337">
    <property type="term" value="P:type I interferon-mediated signaling pathway"/>
    <property type="evidence" value="ECO:0000315"/>
    <property type="project" value="BHF-UCL"/>
</dbReference>
<dbReference type="FunFam" id="1.20.1160.11:FF:000002">
    <property type="entry name" value="Paired amphipathic helix protein SIN3"/>
    <property type="match status" value="1"/>
</dbReference>
<dbReference type="FunFam" id="1.20.1160.11:FF:000001">
    <property type="entry name" value="Paired amphipathic helix protein Sin3"/>
    <property type="match status" value="1"/>
</dbReference>
<dbReference type="FunFam" id="1.20.1160.11:FF:000004">
    <property type="entry name" value="Paired amphipathic helix protein Sin3a"/>
    <property type="match status" value="1"/>
</dbReference>
<dbReference type="Gene3D" id="1.20.1160.11">
    <property type="entry name" value="Paired amphipathic helix"/>
    <property type="match status" value="3"/>
</dbReference>
<dbReference type="InterPro" id="IPR013194">
    <property type="entry name" value="HDAC_interact_dom"/>
</dbReference>
<dbReference type="InterPro" id="IPR003822">
    <property type="entry name" value="PAH"/>
</dbReference>
<dbReference type="InterPro" id="IPR036600">
    <property type="entry name" value="PAH_sf"/>
</dbReference>
<dbReference type="InterPro" id="IPR039774">
    <property type="entry name" value="Sin3-like"/>
</dbReference>
<dbReference type="InterPro" id="IPR031693">
    <property type="entry name" value="Sin3_C"/>
</dbReference>
<dbReference type="PANTHER" id="PTHR12346:SF2">
    <property type="entry name" value="PAIRED AMPHIPATHIC HELIX PROTEIN SIN3A"/>
    <property type="match status" value="1"/>
</dbReference>
<dbReference type="PANTHER" id="PTHR12346">
    <property type="entry name" value="SIN3B-RELATED"/>
    <property type="match status" value="1"/>
</dbReference>
<dbReference type="Pfam" id="PF02671">
    <property type="entry name" value="PAH"/>
    <property type="match status" value="3"/>
</dbReference>
<dbReference type="Pfam" id="PF08295">
    <property type="entry name" value="Sin3_corepress"/>
    <property type="match status" value="1"/>
</dbReference>
<dbReference type="Pfam" id="PF16879">
    <property type="entry name" value="Sin3a_C"/>
    <property type="match status" value="1"/>
</dbReference>
<dbReference type="SMART" id="SM00761">
    <property type="entry name" value="HDAC_interact"/>
    <property type="match status" value="1"/>
</dbReference>
<dbReference type="SUPFAM" id="SSF47762">
    <property type="entry name" value="PAH2 domain"/>
    <property type="match status" value="3"/>
</dbReference>
<dbReference type="PROSITE" id="PS51477">
    <property type="entry name" value="PAH"/>
    <property type="match status" value="3"/>
</dbReference>
<reference evidence="20 22" key="1">
    <citation type="submission" date="2001-09" db="EMBL/GenBank/DDBJ databases">
        <authorList>
            <person name="Guo J.H."/>
            <person name="Yu L."/>
        </authorList>
    </citation>
    <scope>NUCLEOTIDE SEQUENCE [LARGE SCALE MRNA]</scope>
</reference>
<reference evidence="20 21" key="2">
    <citation type="journal article" date="2004" name="Genome Res.">
        <title>The status, quality, and expansion of the NIH full-length cDNA project: the Mammalian Gene Collection (MGC).</title>
        <authorList>
            <consortium name="The MGC Project Team"/>
        </authorList>
    </citation>
    <scope>NUCLEOTIDE SEQUENCE [LARGE SCALE MRNA]</scope>
    <source>
        <tissue>Lung</tissue>
        <tissue evidence="21">Uterus</tissue>
    </source>
</reference>
<reference key="3">
    <citation type="journal article" date="2004" name="Nat. Genet.">
        <title>Complete sequencing and characterization of 21,243 full-length human cDNAs.</title>
        <authorList>
            <person name="Ota T."/>
            <person name="Suzuki Y."/>
            <person name="Nishikawa T."/>
            <person name="Otsuki T."/>
            <person name="Sugiyama T."/>
            <person name="Irie R."/>
            <person name="Wakamatsu A."/>
            <person name="Hayashi K."/>
            <person name="Sato H."/>
            <person name="Nagai K."/>
            <person name="Kimura K."/>
            <person name="Makita H."/>
            <person name="Sekine M."/>
            <person name="Obayashi M."/>
            <person name="Nishi T."/>
            <person name="Shibahara T."/>
            <person name="Tanaka T."/>
            <person name="Ishii S."/>
            <person name="Yamamoto J."/>
            <person name="Saito K."/>
            <person name="Kawai Y."/>
            <person name="Isono Y."/>
            <person name="Nakamura Y."/>
            <person name="Nagahari K."/>
            <person name="Murakami K."/>
            <person name="Yasuda T."/>
            <person name="Iwayanagi T."/>
            <person name="Wagatsuma M."/>
            <person name="Shiratori A."/>
            <person name="Sudo H."/>
            <person name="Hosoiri T."/>
            <person name="Kaku Y."/>
            <person name="Kodaira H."/>
            <person name="Kondo H."/>
            <person name="Sugawara M."/>
            <person name="Takahashi M."/>
            <person name="Kanda K."/>
            <person name="Yokoi T."/>
            <person name="Furuya T."/>
            <person name="Kikkawa E."/>
            <person name="Omura Y."/>
            <person name="Abe K."/>
            <person name="Kamihara K."/>
            <person name="Katsuta N."/>
            <person name="Sato K."/>
            <person name="Tanikawa M."/>
            <person name="Yamazaki M."/>
            <person name="Ninomiya K."/>
            <person name="Ishibashi T."/>
            <person name="Yamashita H."/>
            <person name="Murakawa K."/>
            <person name="Fujimori K."/>
            <person name="Tanai H."/>
            <person name="Kimata M."/>
            <person name="Watanabe M."/>
            <person name="Hiraoka S."/>
            <person name="Chiba Y."/>
            <person name="Ishida S."/>
            <person name="Ono Y."/>
            <person name="Takiguchi S."/>
            <person name="Watanabe S."/>
            <person name="Yosida M."/>
            <person name="Hotuta T."/>
            <person name="Kusano J."/>
            <person name="Kanehori K."/>
            <person name="Takahashi-Fujii A."/>
            <person name="Hara H."/>
            <person name="Tanase T.-O."/>
            <person name="Nomura Y."/>
            <person name="Togiya S."/>
            <person name="Komai F."/>
            <person name="Hara R."/>
            <person name="Takeuchi K."/>
            <person name="Arita M."/>
            <person name="Imose N."/>
            <person name="Musashino K."/>
            <person name="Yuuki H."/>
            <person name="Oshima A."/>
            <person name="Sasaki N."/>
            <person name="Aotsuka S."/>
            <person name="Yoshikawa Y."/>
            <person name="Matsunawa H."/>
            <person name="Ichihara T."/>
            <person name="Shiohata N."/>
            <person name="Sano S."/>
            <person name="Moriya S."/>
            <person name="Momiyama H."/>
            <person name="Satoh N."/>
            <person name="Takami S."/>
            <person name="Terashima Y."/>
            <person name="Suzuki O."/>
            <person name="Nakagawa S."/>
            <person name="Senoh A."/>
            <person name="Mizoguchi H."/>
            <person name="Goto Y."/>
            <person name="Shimizu F."/>
            <person name="Wakebe H."/>
            <person name="Hishigaki H."/>
            <person name="Watanabe T."/>
            <person name="Sugiyama A."/>
            <person name="Takemoto M."/>
            <person name="Kawakami B."/>
            <person name="Yamazaki M."/>
            <person name="Watanabe K."/>
            <person name="Kumagai A."/>
            <person name="Itakura S."/>
            <person name="Fukuzumi Y."/>
            <person name="Fujimori Y."/>
            <person name="Komiyama M."/>
            <person name="Tashiro H."/>
            <person name="Tanigami A."/>
            <person name="Fujiwara T."/>
            <person name="Ono T."/>
            <person name="Yamada K."/>
            <person name="Fujii Y."/>
            <person name="Ozaki K."/>
            <person name="Hirao M."/>
            <person name="Ohmori Y."/>
            <person name="Kawabata A."/>
            <person name="Hikiji T."/>
            <person name="Kobatake N."/>
            <person name="Inagaki H."/>
            <person name="Ikema Y."/>
            <person name="Okamoto S."/>
            <person name="Okitani R."/>
            <person name="Kawakami T."/>
            <person name="Noguchi S."/>
            <person name="Itoh T."/>
            <person name="Shigeta K."/>
            <person name="Senba T."/>
            <person name="Matsumura K."/>
            <person name="Nakajima Y."/>
            <person name="Mizuno T."/>
            <person name="Morinaga M."/>
            <person name="Sasaki M."/>
            <person name="Togashi T."/>
            <person name="Oyama M."/>
            <person name="Hata H."/>
            <person name="Watanabe M."/>
            <person name="Komatsu T."/>
            <person name="Mizushima-Sugano J."/>
            <person name="Satoh T."/>
            <person name="Shirai Y."/>
            <person name="Takahashi Y."/>
            <person name="Nakagawa K."/>
            <person name="Okumura K."/>
            <person name="Nagase T."/>
            <person name="Nomura N."/>
            <person name="Kikuchi H."/>
            <person name="Masuho Y."/>
            <person name="Yamashita R."/>
            <person name="Nakai K."/>
            <person name="Yada T."/>
            <person name="Nakamura Y."/>
            <person name="Ohara O."/>
            <person name="Isogai T."/>
            <person name="Sugano S."/>
        </authorList>
    </citation>
    <scope>NUCLEOTIDE SEQUENCE [LARGE SCALE MRNA] OF 1-1026</scope>
    <source>
        <tissue>Brain</tissue>
        <tissue>Teratocarcinoma</tissue>
    </source>
</reference>
<reference evidence="20 22" key="4">
    <citation type="submission" date="2001-07" db="EMBL/GenBank/DDBJ databases">
        <authorList>
            <person name="Bu X."/>
            <person name="Fu Y."/>
            <person name="Jiang S."/>
            <person name="Avraham S."/>
            <person name="Avraham H."/>
        </authorList>
    </citation>
    <scope>NUCLEOTIDE SEQUENCE [MRNA] OF 1-620</scope>
</reference>
<reference key="5">
    <citation type="journal article" date="2007" name="BMC Genomics">
        <title>The full-ORF clone resource of the German cDNA consortium.</title>
        <authorList>
            <person name="Bechtel S."/>
            <person name="Rosenfelder H."/>
            <person name="Duda A."/>
            <person name="Schmidt C.P."/>
            <person name="Ernst U."/>
            <person name="Wellenreuther R."/>
            <person name="Mehrle A."/>
            <person name="Schuster C."/>
            <person name="Bahr A."/>
            <person name="Bloecker H."/>
            <person name="Heubner D."/>
            <person name="Hoerlein A."/>
            <person name="Michel G."/>
            <person name="Wedler H."/>
            <person name="Koehrer K."/>
            <person name="Ottenwaelder B."/>
            <person name="Poustka A."/>
            <person name="Wiemann S."/>
            <person name="Schupp I."/>
        </authorList>
    </citation>
    <scope>NUCLEOTIDE SEQUENCE [LARGE SCALE MRNA] OF 913-1273</scope>
    <source>
        <tissue>Testis</tissue>
    </source>
</reference>
<reference evidence="20" key="6">
    <citation type="journal article" date="2001" name="Mol. Cell. Biol.">
        <title>PSF is a novel corepressor that mediates its effect through Sin3A and the DNA binding domain of nuclear hormone receptors.</title>
        <authorList>
            <person name="Mathur M."/>
            <person name="Tucker P.W."/>
            <person name="Samuels H.H."/>
        </authorList>
    </citation>
    <scope>INTERACTION WITH SFPQ</scope>
</reference>
<reference key="7">
    <citation type="journal article" date="2002" name="Cell">
        <title>Recruitment of O-GlcNAc transferase to promoters by corepressor mSin3A: coupling protein O-GlcNAcylation to transcriptional repression.</title>
        <authorList>
            <person name="Yang X."/>
            <person name="Zhang F."/>
            <person name="Kudlow J.E."/>
        </authorList>
    </citation>
    <scope>INTERACTION WITH OGT</scope>
    <scope>FUNCTION</scope>
</reference>
<reference evidence="20" key="8">
    <citation type="journal article" date="2002" name="Endocrinology">
        <title>Transcriptional activation of human CYP17 in H295R adrenocortical cells depends on complex formation among p54(nrb)/NonO, protein-associated splicing factor, and SF-1, a complex that also participates in repression of transcription.</title>
        <authorList>
            <person name="Sewer M.B."/>
            <person name="Nguyen V.Q."/>
            <person name="Huang C.J."/>
            <person name="Tucker P.W."/>
            <person name="Kagawa N."/>
            <person name="Waterman M.R."/>
        </authorList>
    </citation>
    <scope>INTERACTION WITH SFPQ</scope>
</reference>
<reference evidence="20" key="9">
    <citation type="journal article" date="2003" name="J. Biol. Chem.">
        <title>DACH1 inhibits transforming growth factor-beta signaling through binding Smad4.</title>
        <authorList>
            <person name="Wu K."/>
            <person name="Yang Y."/>
            <person name="Wang C."/>
            <person name="Davoli M.A."/>
            <person name="D'Amico M."/>
            <person name="Li A."/>
            <person name="Cveklova K."/>
            <person name="Kozmik Z."/>
            <person name="Lisanti M.P."/>
            <person name="Russell R.G."/>
            <person name="Cvekl A."/>
            <person name="Pestell R.G."/>
        </authorList>
    </citation>
    <scope>INTERACTION WITH DACH1</scope>
</reference>
<reference evidence="20" key="10">
    <citation type="journal article" date="2003" name="Genes Dev.">
        <title>Human Sin3 deacetylase and trithorax-related Set1/Ash2 histone H3-K4 methyltransferase are tethered together selectively by the cell-proliferation factor HCF-1.</title>
        <authorList>
            <person name="Wysocka J."/>
            <person name="Myers M.P."/>
            <person name="Laherty C.D."/>
            <person name="Eisenman R.N."/>
            <person name="Herr W."/>
        </authorList>
    </citation>
    <scope>INTERACTION WITH HCFC1</scope>
</reference>
<reference key="11">
    <citation type="journal article" date="2003" name="Mol. Cell. Biol.">
        <title>Identification and characterization of three new components of the mSin3A corepressor complex.</title>
        <authorList>
            <person name="Fleischer T.C."/>
            <person name="Yun U.J."/>
            <person name="Ayer D.E."/>
        </authorList>
    </citation>
    <scope>INTERACTION WITH SAP130; SUDS3; ARID4B; HDAC1 AND HDAC2</scope>
</reference>
<reference key="12">
    <citation type="journal article" date="2004" name="Biochem. Biophys. Res. Commun.">
        <title>Identification of a novel BRMS1-homologue protein p40 as a component of the mSin3A/p33(ING1b)/HDAC1 deacetylase complex.</title>
        <authorList>
            <person name="Nikolaev A.Y."/>
            <person name="Papanikolaou N.A."/>
            <person name="Li M."/>
            <person name="Qin J."/>
            <person name="Gu W."/>
        </authorList>
    </citation>
    <scope>INTERACTION WITH BRMS1L</scope>
</reference>
<reference key="13">
    <citation type="journal article" date="2006" name="Cell">
        <title>Global, in vivo, and site-specific phosphorylation dynamics in signaling networks.</title>
        <authorList>
            <person name="Olsen J.V."/>
            <person name="Blagoev B."/>
            <person name="Gnad F."/>
            <person name="Macek B."/>
            <person name="Kumar C."/>
            <person name="Mortensen P."/>
            <person name="Mann M."/>
        </authorList>
    </citation>
    <scope>PHOSPHORYLATION [LARGE SCALE ANALYSIS] AT SER-860</scope>
    <scope>IDENTIFICATION BY MASS SPECTROMETRY [LARGE SCALE ANALYSIS]</scope>
    <source>
        <tissue>Cervix carcinoma</tissue>
    </source>
</reference>
<reference key="14">
    <citation type="journal article" date="2006" name="Nucleic Acids Res.">
        <title>SAP30L interacts with members of the Sin3A corepressor complex and targets Sin3A to the nucleolus.</title>
        <authorList>
            <person name="Viiri K.M."/>
            <person name="Korkeamaeki H."/>
            <person name="Kukkonen M.K."/>
            <person name="Nieminen L.K."/>
            <person name="Lindfors K."/>
            <person name="Peterson P."/>
            <person name="Maeki M."/>
            <person name="Kainulainen H."/>
            <person name="Lohi O."/>
        </authorList>
    </citation>
    <scope>SUBCELLULAR LOCATION</scope>
    <scope>INTERACTION WITH SAP30L</scope>
</reference>
<reference key="15">
    <citation type="journal article" date="2007" name="Biochem. Biophys. Res. Commun.">
        <title>CR/periphilin is a transcriptional co-repressor involved in cell cycle progression.</title>
        <authorList>
            <person name="Kurita M."/>
            <person name="Suzuki H."/>
            <person name="Kawano Y."/>
            <person name="Aiso S."/>
            <person name="Matsuoka M."/>
        </authorList>
    </citation>
    <scope>INTERACTION WITH PPHLN1</scope>
</reference>
<reference key="16">
    <citation type="journal article" date="2007" name="J. Proteome Res.">
        <title>TOPORS functions as a SUMO-1 E3 ligase for chromatin-modifying proteins.</title>
        <authorList>
            <person name="Pungaliya P."/>
            <person name="Kulkarni D."/>
            <person name="Park H.J."/>
            <person name="Marshall H."/>
            <person name="Zheng H."/>
            <person name="Lackland H."/>
            <person name="Saleem A."/>
            <person name="Rubin E.H."/>
        </authorList>
    </citation>
    <scope>INTERACTION WITH TOPORS</scope>
    <scope>SUMOYLATION BY TOPORS</scope>
    <scope>DESUMOYLATION BY SENP2</scope>
</reference>
<reference key="17">
    <citation type="journal article" date="2008" name="Mol. Cell">
        <title>Kinase-selective enrichment enables quantitative phosphoproteomics of the kinome across the cell cycle.</title>
        <authorList>
            <person name="Daub H."/>
            <person name="Olsen J.V."/>
            <person name="Bairlein M."/>
            <person name="Gnad F."/>
            <person name="Oppermann F.S."/>
            <person name="Korner R."/>
            <person name="Greff Z."/>
            <person name="Keri G."/>
            <person name="Stemmann O."/>
            <person name="Mann M."/>
        </authorList>
    </citation>
    <scope>PHOSPHORYLATION [LARGE SCALE ANALYSIS] AT SER-10</scope>
    <scope>IDENTIFICATION BY MASS SPECTROMETRY [LARGE SCALE ANALYSIS]</scope>
    <source>
        <tissue>Cervix carcinoma</tissue>
    </source>
</reference>
<reference key="18">
    <citation type="journal article" date="2008" name="Proc. Natl. Acad. Sci. U.S.A.">
        <title>A quantitative atlas of mitotic phosphorylation.</title>
        <authorList>
            <person name="Dephoure N."/>
            <person name="Zhou C."/>
            <person name="Villen J."/>
            <person name="Beausoleil S.A."/>
            <person name="Bakalarski C.E."/>
            <person name="Elledge S.J."/>
            <person name="Gygi S.P."/>
        </authorList>
    </citation>
    <scope>PHOSPHORYLATION [LARGE SCALE ANALYSIS] AT SER-10; SER-277; SER-832; SER-940 AND SER-1112</scope>
    <scope>IDENTIFICATION BY MASS SPECTROMETRY [LARGE SCALE ANALYSIS]</scope>
    <source>
        <tissue>Cervix carcinoma</tissue>
    </source>
</reference>
<reference key="19">
    <citation type="journal article" date="2009" name="Sci. Signal.">
        <title>Quantitative phosphoproteomic analysis of T cell receptor signaling reveals system-wide modulation of protein-protein interactions.</title>
        <authorList>
            <person name="Mayya V."/>
            <person name="Lundgren D.H."/>
            <person name="Hwang S.-I."/>
            <person name="Rezaul K."/>
            <person name="Wu L."/>
            <person name="Eng J.K."/>
            <person name="Rodionov V."/>
            <person name="Han D.K."/>
        </authorList>
    </citation>
    <scope>PHOSPHORYLATION [LARGE SCALE ANALYSIS] AT SER-832 AND SER-1112</scope>
    <scope>IDENTIFICATION BY MASS SPECTROMETRY [LARGE SCALE ANALYSIS]</scope>
    <source>
        <tissue>Leukemic T-cell</tissue>
    </source>
</reference>
<reference key="20">
    <citation type="journal article" date="2009" name="Science">
        <title>Lysine acetylation targets protein complexes and co-regulates major cellular functions.</title>
        <authorList>
            <person name="Choudhary C."/>
            <person name="Kumar C."/>
            <person name="Gnad F."/>
            <person name="Nielsen M.L."/>
            <person name="Rehman M."/>
            <person name="Walther T.C."/>
            <person name="Olsen J.V."/>
            <person name="Mann M."/>
        </authorList>
    </citation>
    <scope>ACETYLATION [LARGE SCALE ANALYSIS] AT LYS-469</scope>
    <scope>IDENTIFICATION BY MASS SPECTROMETRY [LARGE SCALE ANALYSIS]</scope>
</reference>
<reference key="21">
    <citation type="journal article" date="2009" name="Science">
        <title>Regulation of histone acetylation in the nucleus by sphingosine-1-phosphate.</title>
        <authorList>
            <person name="Hait N.C."/>
            <person name="Allegood J."/>
            <person name="Maceyka M."/>
            <person name="Strub G.M."/>
            <person name="Harikumar K.B."/>
            <person name="Singh S.K."/>
            <person name="Luo C."/>
            <person name="Marmorstein R."/>
            <person name="Kordula T."/>
            <person name="Milstien S."/>
            <person name="Spiegel S."/>
        </authorList>
    </citation>
    <scope>INTERACTION WITH SPHK2</scope>
</reference>
<reference key="22">
    <citation type="journal article" date="2010" name="Sci. Signal.">
        <title>Quantitative phosphoproteomics reveals widespread full phosphorylation site occupancy during mitosis.</title>
        <authorList>
            <person name="Olsen J.V."/>
            <person name="Vermeulen M."/>
            <person name="Santamaria A."/>
            <person name="Kumar C."/>
            <person name="Miller M.L."/>
            <person name="Jensen L.J."/>
            <person name="Gnad F."/>
            <person name="Cox J."/>
            <person name="Jensen T.S."/>
            <person name="Nigg E.A."/>
            <person name="Brunak S."/>
            <person name="Mann M."/>
        </authorList>
    </citation>
    <scope>PHOSPHORYLATION [LARGE SCALE ANALYSIS] AT SER-832; SER-860; SER-940 AND SER-1112</scope>
    <scope>IDENTIFICATION BY MASS SPECTROMETRY [LARGE SCALE ANALYSIS]</scope>
    <source>
        <tissue>Cervix carcinoma</tissue>
    </source>
</reference>
<reference key="23">
    <citation type="journal article" date="2011" name="BMC Syst. Biol.">
        <title>Initial characterization of the human central proteome.</title>
        <authorList>
            <person name="Burkard T.R."/>
            <person name="Planyavsky M."/>
            <person name="Kaupe I."/>
            <person name="Breitwieser F.P."/>
            <person name="Buerckstuemmer T."/>
            <person name="Bennett K.L."/>
            <person name="Superti-Furga G."/>
            <person name="Colinge J."/>
        </authorList>
    </citation>
    <scope>IDENTIFICATION BY MASS SPECTROMETRY [LARGE SCALE ANALYSIS]</scope>
</reference>
<reference key="24">
    <citation type="journal article" date="2011" name="Nature">
        <title>TET1 and hydroxymethylcytosine in transcription and DNA methylation fidelity.</title>
        <authorList>
            <person name="Williams K."/>
            <person name="Christensen J."/>
            <person name="Pedersen M.T."/>
            <person name="Johansen J.V."/>
            <person name="Cloos P.A."/>
            <person name="Rappsilber J."/>
            <person name="Helin K."/>
        </authorList>
    </citation>
    <scope>INTERACTION WITH TET1</scope>
</reference>
<reference key="25">
    <citation type="journal article" date="2011" name="Sci. Signal.">
        <title>System-wide temporal characterization of the proteome and phosphoproteome of human embryonic stem cell differentiation.</title>
        <authorList>
            <person name="Rigbolt K.T."/>
            <person name="Prokhorova T.A."/>
            <person name="Akimov V."/>
            <person name="Henningsen J."/>
            <person name="Johansen P.T."/>
            <person name="Kratchmarova I."/>
            <person name="Kassem M."/>
            <person name="Mann M."/>
            <person name="Olsen J.V."/>
            <person name="Blagoev B."/>
        </authorList>
    </citation>
    <scope>PHOSPHORYLATION [LARGE SCALE ANALYSIS] AT SER-832 AND SER-860</scope>
    <scope>IDENTIFICATION BY MASS SPECTROMETRY [LARGE SCALE ANALYSIS]</scope>
</reference>
<reference key="26">
    <citation type="journal article" date="2013" name="J. Proteome Res.">
        <title>Toward a comprehensive characterization of a human cancer cell phosphoproteome.</title>
        <authorList>
            <person name="Zhou H."/>
            <person name="Di Palma S."/>
            <person name="Preisinger C."/>
            <person name="Peng M."/>
            <person name="Polat A.N."/>
            <person name="Heck A.J."/>
            <person name="Mohammed S."/>
        </authorList>
    </citation>
    <scope>PHOSPHORYLATION [LARGE SCALE ANALYSIS] AT SER-10; SER-832; SER-940 AND SER-1112</scope>
    <scope>IDENTIFICATION BY MASS SPECTROMETRY [LARGE SCALE ANALYSIS]</scope>
    <source>
        <tissue>Cervix carcinoma</tissue>
        <tissue>Erythroleukemia</tissue>
    </source>
</reference>
<reference key="27">
    <citation type="journal article" date="2014" name="J. Proteomics">
        <title>An enzyme assisted RP-RPLC approach for in-depth analysis of human liver phosphoproteome.</title>
        <authorList>
            <person name="Bian Y."/>
            <person name="Song C."/>
            <person name="Cheng K."/>
            <person name="Dong M."/>
            <person name="Wang F."/>
            <person name="Huang J."/>
            <person name="Sun D."/>
            <person name="Wang L."/>
            <person name="Ye M."/>
            <person name="Zou H."/>
        </authorList>
    </citation>
    <scope>PHOSPHORYLATION [LARGE SCALE ANALYSIS] AT SER-1089</scope>
    <scope>IDENTIFICATION BY MASS SPECTROMETRY [LARGE SCALE ANALYSIS]</scope>
    <source>
        <tissue>Liver</tissue>
    </source>
</reference>
<reference key="28">
    <citation type="journal article" date="2016" name="Nat. Genet.">
        <title>Haploinsufficiency of MeCP2-interacting transcriptional co-repressor SIN3A causes mild intellectual disability by affecting the development of cortical integrity.</title>
        <authorList>
            <person name="Witteveen J.S."/>
            <person name="Willemsen M.H."/>
            <person name="Dombroski T.C."/>
            <person name="van Bakel N.H."/>
            <person name="Nillesen W.M."/>
            <person name="van Hulten J.A."/>
            <person name="Jansen E.J."/>
            <person name="Verkaik D."/>
            <person name="Veenstra-Knol H.E."/>
            <person name="van Ravenswaaij-Arts C.M."/>
            <person name="Wassink-Ruiter J.S."/>
            <person name="Vincent M."/>
            <person name="David A."/>
            <person name="Le Caignec C."/>
            <person name="Schieving J."/>
            <person name="Gilissen C."/>
            <person name="Foulds N."/>
            <person name="Rump P."/>
            <person name="Strom T."/>
            <person name="Cremer K."/>
            <person name="Zink A.M."/>
            <person name="Engels H."/>
            <person name="de Munnik S.A."/>
            <person name="Visser J.E."/>
            <person name="Brunner H.G."/>
            <person name="Martens G.J."/>
            <person name="Pfundt R."/>
            <person name="Kleefstra T."/>
            <person name="Kolk S.M."/>
        </authorList>
    </citation>
    <scope>TISSUE SPECIFICITY</scope>
    <scope>INVOLVEMENT IN WITKOS</scope>
    <scope>VARIANT WITKOS 1104-ARG--PRO-1273 DEL</scope>
</reference>
<reference key="29">
    <citation type="journal article" date="2017" name="Nat. Struct. Mol. Biol.">
        <title>Site-specific mapping of the human SUMO proteome reveals co-modification with phosphorylation.</title>
        <authorList>
            <person name="Hendriks I.A."/>
            <person name="Lyon D."/>
            <person name="Young C."/>
            <person name="Jensen L.J."/>
            <person name="Vertegaal A.C."/>
            <person name="Nielsen M.L."/>
        </authorList>
    </citation>
    <scope>SUMOYLATION [LARGE SCALE ANALYSIS] AT LYS-122; LYS-134 AND LYS-563</scope>
    <scope>IDENTIFICATION BY MASS SPECTROMETRY [LARGE SCALE ANALYSIS]</scope>
</reference>
<reference key="30">
    <citation type="journal article" date="2019" name="Eur. J. Med. Genet.">
        <title>Novel SIN3A mutation identified in a Japanese patient with Witteveen-Kolk syndrome.</title>
        <authorList>
            <person name="Narumi-Kishimoto Y."/>
            <person name="Araki N."/>
            <person name="Migita O."/>
            <person name="Kawai T."/>
            <person name="Okamura K."/>
            <person name="Nakabayashi K."/>
            <person name="Kaname T."/>
            <person name="Ozawa Y."/>
            <person name="Ozawa H."/>
            <person name="Takada F."/>
            <person name="Hata K."/>
        </authorList>
    </citation>
    <scope>INVOLVEMENT IN WITKOS</scope>
</reference>
<protein>
    <recommendedName>
        <fullName>Paired amphipathic helix protein Sin3a</fullName>
    </recommendedName>
    <alternativeName>
        <fullName>Histone deacetylase complex subunit Sin3a</fullName>
    </alternativeName>
    <alternativeName>
        <fullName>Transcriptional corepressor Sin3a</fullName>
    </alternativeName>
</protein>
<proteinExistence type="evidence at protein level"/>
<keyword id="KW-0007">Acetylation</keyword>
<keyword id="KW-0090">Biological rhythms</keyword>
<keyword id="KW-0175">Coiled coil</keyword>
<keyword id="KW-0225">Disease variant</keyword>
<keyword id="KW-0242">Dwarfism</keyword>
<keyword id="KW-0991">Intellectual disability</keyword>
<keyword id="KW-1017">Isopeptide bond</keyword>
<keyword id="KW-0539">Nucleus</keyword>
<keyword id="KW-0597">Phosphoprotein</keyword>
<keyword id="KW-1267">Proteomics identification</keyword>
<keyword id="KW-1185">Reference proteome</keyword>
<keyword id="KW-0677">Repeat</keyword>
<keyword id="KW-0678">Repressor</keyword>
<keyword id="KW-0804">Transcription</keyword>
<keyword id="KW-0805">Transcription regulation</keyword>
<keyword id="KW-0832">Ubl conjugation</keyword>
<evidence type="ECO:0000250" key="1"/>
<evidence type="ECO:0000250" key="2">
    <source>
        <dbReference type="UniProtKB" id="Q60520"/>
    </source>
</evidence>
<evidence type="ECO:0000255" key="3"/>
<evidence type="ECO:0000255" key="4">
    <source>
        <dbReference type="PROSITE-ProRule" id="PRU00810"/>
    </source>
</evidence>
<evidence type="ECO:0000256" key="5">
    <source>
        <dbReference type="SAM" id="MobiDB-lite"/>
    </source>
</evidence>
<evidence type="ECO:0000269" key="6">
    <source>
    </source>
</evidence>
<evidence type="ECO:0000269" key="7">
    <source>
    </source>
</evidence>
<evidence type="ECO:0000269" key="8">
    <source>
    </source>
</evidence>
<evidence type="ECO:0000269" key="9">
    <source>
    </source>
</evidence>
<evidence type="ECO:0000269" key="10">
    <source>
    </source>
</evidence>
<evidence type="ECO:0000269" key="11">
    <source>
    </source>
</evidence>
<evidence type="ECO:0000269" key="12">
    <source>
    </source>
</evidence>
<evidence type="ECO:0000269" key="13">
    <source>
    </source>
</evidence>
<evidence type="ECO:0000269" key="14">
    <source>
    </source>
</evidence>
<evidence type="ECO:0000269" key="15">
    <source>
    </source>
</evidence>
<evidence type="ECO:0000269" key="16">
    <source>
    </source>
</evidence>
<evidence type="ECO:0000269" key="17">
    <source>
    </source>
</evidence>
<evidence type="ECO:0000269" key="18">
    <source>
    </source>
</evidence>
<evidence type="ECO:0000269" key="19">
    <source>
    </source>
</evidence>
<evidence type="ECO:0000305" key="20"/>
<evidence type="ECO:0000312" key="21">
    <source>
        <dbReference type="EMBL" id="AAH18973.1"/>
    </source>
</evidence>
<evidence type="ECO:0000312" key="22">
    <source>
        <dbReference type="EMBL" id="AAP97288.1"/>
    </source>
</evidence>
<evidence type="ECO:0000312" key="23">
    <source>
        <dbReference type="HGNC" id="HGNC:19353"/>
    </source>
</evidence>
<evidence type="ECO:0007744" key="24">
    <source>
    </source>
</evidence>
<evidence type="ECO:0007744" key="25">
    <source>
    </source>
</evidence>
<evidence type="ECO:0007744" key="26">
    <source>
    </source>
</evidence>
<evidence type="ECO:0007744" key="27">
    <source>
    </source>
</evidence>
<evidence type="ECO:0007744" key="28">
    <source>
    </source>
</evidence>
<evidence type="ECO:0007744" key="29">
    <source>
    </source>
</evidence>
<evidence type="ECO:0007744" key="30">
    <source>
    </source>
</evidence>
<evidence type="ECO:0007744" key="31">
    <source>
    </source>
</evidence>
<evidence type="ECO:0007744" key="32">
    <source>
    </source>
</evidence>
<evidence type="ECO:0007744" key="33">
    <source>
    </source>
</evidence>